<accession>P01219</accession>
<gene>
    <name type="primary">CGA</name>
</gene>
<protein>
    <recommendedName>
        <fullName>Glycoprotein hormones alpha chain</fullName>
    </recommendedName>
    <alternativeName>
        <fullName>Anterior pituitary glycoprotein hormones common subunit alpha</fullName>
    </alternativeName>
    <alternativeName>
        <fullName>Follicle-stimulating hormone alpha chain</fullName>
        <shortName>FSH-alpha</shortName>
    </alternativeName>
    <alternativeName>
        <fullName>Follitropin alpha chain</fullName>
    </alternativeName>
    <alternativeName>
        <fullName>Luteinizing hormone alpha chain</fullName>
        <shortName>LSH-alpha</shortName>
    </alternativeName>
    <alternativeName>
        <fullName>Lutropin alpha chain</fullName>
    </alternativeName>
    <alternativeName>
        <fullName>Thyroid-stimulating hormone alpha chain</fullName>
        <shortName>TSH-alpha</shortName>
    </alternativeName>
    <alternativeName>
        <fullName>Thyrotropin alpha chain</fullName>
    </alternativeName>
</protein>
<feature type="signal peptide">
    <location>
        <begin position="1"/>
        <end position="24"/>
    </location>
</feature>
<feature type="chain" id="PRO_0000011649" description="Glycoprotein hormones alpha chain">
    <location>
        <begin position="25"/>
        <end position="120"/>
    </location>
</feature>
<feature type="glycosylation site" description="N-linked (GlcNAc...) asparagine" evidence="2">
    <location>
        <position position="80"/>
    </location>
</feature>
<feature type="glycosylation site" description="N-linked (GlcNAc...) asparagine" evidence="2">
    <location>
        <position position="106"/>
    </location>
</feature>
<feature type="disulfide bond" evidence="1">
    <location>
        <begin position="35"/>
        <end position="59"/>
    </location>
</feature>
<feature type="disulfide bond">
    <location>
        <begin position="38"/>
        <end position="88"/>
    </location>
</feature>
<feature type="disulfide bond" evidence="1">
    <location>
        <begin position="56"/>
        <end position="110"/>
    </location>
</feature>
<feature type="disulfide bond" evidence="1">
    <location>
        <begin position="60"/>
        <end position="112"/>
    </location>
</feature>
<feature type="disulfide bond" evidence="1">
    <location>
        <begin position="87"/>
        <end position="115"/>
    </location>
</feature>
<sequence>MDYYRKYAAVILAILSVFLQILHSFPDGEFTMQGCPECKLKENKYFSKLGAPIYQCMGCCFSRAYPTPARSKKTMLVPKNITSEATCCVAKAFTKATVMGNARVENHTECHCSTCYYHKS</sequence>
<reference key="1">
    <citation type="journal article" date="1989" name="Mol. Cell. Endocrinol.">
        <title>Molecular cloning of cDNAs for precursors of porcine pituitary glycoprotein hormone common alpha-subunit and of thyroid stimulating hormone beta-subunit.</title>
        <authorList>
            <person name="Hirai T."/>
            <person name="Takikawa H."/>
            <person name="Kato Y."/>
        </authorList>
    </citation>
    <scope>NUCLEOTIDE SEQUENCE [GENOMIC DNA]</scope>
</reference>
<reference key="2">
    <citation type="submission" date="1992-03" db="EMBL/GenBank/DDBJ databases">
        <authorList>
            <person name="Kato Y."/>
            <person name="Ezashi T."/>
            <person name="Hirai T."/>
            <person name="Kato T."/>
        </authorList>
    </citation>
    <scope>NUCLEOTIDE SEQUENCE [GENOMIC DNA]</scope>
</reference>
<reference key="3">
    <citation type="journal article" date="1973" name="Eur. J. Biochem.">
        <title>The primary structure of the porcine luteinizing-hormone alpha-subunit.</title>
        <authorList>
            <person name="Maghuin-Rogister G."/>
            <person name="Combarnous Y."/>
            <person name="Hennen G."/>
        </authorList>
    </citation>
    <scope>PROTEIN SEQUENCE OF 31-120</scope>
</reference>
<reference key="4">
    <citation type="journal article" date="1974" name="Endocrinol. Exp.">
        <authorList>
            <person name="Closset J."/>
            <person name="Maghuin-Rogister G."/>
            <person name="Hennen G."/>
        </authorList>
    </citation>
    <scope>PRELIMINARY PROTEIN SEQUENCE OF 25-120</scope>
</reference>
<reference key="5">
    <citation type="journal article" date="1974" name="Biochem. Soc. Trans.">
        <title>The disulphide bridges of porcine luteinizing hormone alpha subunit.</title>
        <authorList>
            <person name="Combarnous Y."/>
            <person name="Hennen G."/>
        </authorList>
    </citation>
    <scope>PRELIMINARY ASSIGNMENT OF DISULFIDE BONDS</scope>
</reference>
<dbReference type="EMBL" id="D00768">
    <property type="protein sequence ID" value="BAA00664.1"/>
    <property type="molecule type" value="Genomic_DNA"/>
</dbReference>
<dbReference type="PIR" id="A30339">
    <property type="entry name" value="UTPGA"/>
</dbReference>
<dbReference type="RefSeq" id="NP_999611.1">
    <property type="nucleotide sequence ID" value="NM_214446.1"/>
</dbReference>
<dbReference type="RefSeq" id="XP_005659334.1">
    <property type="nucleotide sequence ID" value="XM_005659277.3"/>
</dbReference>
<dbReference type="SMR" id="P01219"/>
<dbReference type="FunCoup" id="P01219">
    <property type="interactions" value="300"/>
</dbReference>
<dbReference type="STRING" id="9823.ENSSSCP00000046920"/>
<dbReference type="GlyCosmos" id="P01219">
    <property type="glycosylation" value="2 sites, No reported glycans"/>
</dbReference>
<dbReference type="GlyGen" id="P01219">
    <property type="glycosylation" value="3 sites"/>
</dbReference>
<dbReference type="iPTMnet" id="P01219"/>
<dbReference type="PaxDb" id="9823-ENSSSCP00000023820"/>
<dbReference type="Ensembl" id="ENSSSCT00000031283.3">
    <property type="protein sequence ID" value="ENSSSCP00000023820.1"/>
    <property type="gene ID" value="ENSSSCG00000025434.4"/>
</dbReference>
<dbReference type="Ensembl" id="ENSSSCT00015055113.1">
    <property type="protein sequence ID" value="ENSSSCP00015022109.1"/>
    <property type="gene ID" value="ENSSSCG00015041310.1"/>
</dbReference>
<dbReference type="Ensembl" id="ENSSSCT00025082222.1">
    <property type="protein sequence ID" value="ENSSSCP00025035691.1"/>
    <property type="gene ID" value="ENSSSCG00025059995.1"/>
</dbReference>
<dbReference type="Ensembl" id="ENSSSCT00030090805.1">
    <property type="protein sequence ID" value="ENSSSCP00030041810.1"/>
    <property type="gene ID" value="ENSSSCG00030064936.1"/>
</dbReference>
<dbReference type="Ensembl" id="ENSSSCT00035041380.1">
    <property type="protein sequence ID" value="ENSSSCP00035016532.1"/>
    <property type="gene ID" value="ENSSSCG00035031257.1"/>
</dbReference>
<dbReference type="Ensembl" id="ENSSSCT00040099911.1">
    <property type="protein sequence ID" value="ENSSSCP00040044850.1"/>
    <property type="gene ID" value="ENSSSCG00040072517.1"/>
</dbReference>
<dbReference type="Ensembl" id="ENSSSCT00045064433.1">
    <property type="protein sequence ID" value="ENSSSCP00045045521.1"/>
    <property type="gene ID" value="ENSSSCG00045037340.1"/>
</dbReference>
<dbReference type="Ensembl" id="ENSSSCT00050098066.1">
    <property type="protein sequence ID" value="ENSSSCP00050042324.1"/>
    <property type="gene ID" value="ENSSSCG00050071865.1"/>
</dbReference>
<dbReference type="Ensembl" id="ENSSSCT00055005486.1">
    <property type="protein sequence ID" value="ENSSSCP00055004251.1"/>
    <property type="gene ID" value="ENSSSCG00055002866.1"/>
</dbReference>
<dbReference type="Ensembl" id="ENSSSCT00060047860.1">
    <property type="protein sequence ID" value="ENSSSCP00060020496.1"/>
    <property type="gene ID" value="ENSSSCG00060035313.1"/>
</dbReference>
<dbReference type="Ensembl" id="ENSSSCT00065000539.1">
    <property type="protein sequence ID" value="ENSSSCP00065000099.1"/>
    <property type="gene ID" value="ENSSSCG00065000479.1"/>
</dbReference>
<dbReference type="Ensembl" id="ENSSSCT00070049394.1">
    <property type="protein sequence ID" value="ENSSSCP00070041721.1"/>
    <property type="gene ID" value="ENSSSCG00070024729.1"/>
</dbReference>
<dbReference type="Ensembl" id="ENSSSCT00085041916">
    <property type="protein sequence ID" value="ENSSSCP00085029316"/>
    <property type="gene ID" value="ENSSSCG00085021939"/>
</dbReference>
<dbReference type="Ensembl" id="ENSSSCT00090058952">
    <property type="protein sequence ID" value="ENSSSCP00090036932"/>
    <property type="gene ID" value="ENSSSCG00090033248"/>
</dbReference>
<dbReference type="Ensembl" id="ENSSSCT00105022604">
    <property type="protein sequence ID" value="ENSSSCP00105016336"/>
    <property type="gene ID" value="ENSSSCG00105011360"/>
</dbReference>
<dbReference type="Ensembl" id="ENSSSCT00110014847">
    <property type="protein sequence ID" value="ENSSSCP00110010316"/>
    <property type="gene ID" value="ENSSSCG00110007652"/>
</dbReference>
<dbReference type="Ensembl" id="ENSSSCT00130062870">
    <property type="protein sequence ID" value="ENSSSCP00130045045"/>
    <property type="gene ID" value="ENSSSCG00130032191"/>
</dbReference>
<dbReference type="GeneID" id="406869"/>
<dbReference type="KEGG" id="ssc:406869"/>
<dbReference type="CTD" id="1081"/>
<dbReference type="VGNC" id="VGNC:86613">
    <property type="gene designation" value="CGA"/>
</dbReference>
<dbReference type="eggNOG" id="ENOG502S1PK">
    <property type="taxonomic scope" value="Eukaryota"/>
</dbReference>
<dbReference type="GeneTree" id="ENSGT00390000012242"/>
<dbReference type="HOGENOM" id="CLU_148106_0_0_1"/>
<dbReference type="InParanoid" id="P01219"/>
<dbReference type="OMA" id="VKNHTDC"/>
<dbReference type="OrthoDB" id="9852859at2759"/>
<dbReference type="TreeFam" id="TF332733"/>
<dbReference type="Reactome" id="R-SSC-193048">
    <property type="pathway name" value="Androgen biosynthesis"/>
</dbReference>
<dbReference type="Reactome" id="R-SSC-193993">
    <property type="pathway name" value="Mineralocorticoid biosynthesis"/>
</dbReference>
<dbReference type="Reactome" id="R-SSC-209822">
    <property type="pathway name" value="Glycoprotein hormones"/>
</dbReference>
<dbReference type="Reactome" id="R-SSC-209968">
    <property type="pathway name" value="Thyroxine biosynthesis"/>
</dbReference>
<dbReference type="Reactome" id="R-SSC-375281">
    <property type="pathway name" value="Hormone ligand-binding receptors"/>
</dbReference>
<dbReference type="Reactome" id="R-SSC-418555">
    <property type="pathway name" value="G alpha (s) signalling events"/>
</dbReference>
<dbReference type="Reactome" id="R-SSC-8866910">
    <property type="pathway name" value="TFAP2 (AP-2) family regulates transcription of growth factors and their receptors"/>
</dbReference>
<dbReference type="Reactome" id="R-SSC-975578">
    <property type="pathway name" value="Reactions specific to the complex N-glycan synthesis pathway"/>
</dbReference>
<dbReference type="Proteomes" id="UP000008227">
    <property type="component" value="Chromosome 1"/>
</dbReference>
<dbReference type="Proteomes" id="UP000314985">
    <property type="component" value="Chromosome 1"/>
</dbReference>
<dbReference type="Proteomes" id="UP000694570">
    <property type="component" value="Unplaced"/>
</dbReference>
<dbReference type="Proteomes" id="UP000694571">
    <property type="component" value="Unplaced"/>
</dbReference>
<dbReference type="Proteomes" id="UP000694720">
    <property type="component" value="Unplaced"/>
</dbReference>
<dbReference type="Proteomes" id="UP000694722">
    <property type="component" value="Unplaced"/>
</dbReference>
<dbReference type="Proteomes" id="UP000694723">
    <property type="component" value="Unplaced"/>
</dbReference>
<dbReference type="Proteomes" id="UP000694724">
    <property type="component" value="Unplaced"/>
</dbReference>
<dbReference type="Proteomes" id="UP000694725">
    <property type="component" value="Unplaced"/>
</dbReference>
<dbReference type="Proteomes" id="UP000694726">
    <property type="component" value="Unplaced"/>
</dbReference>
<dbReference type="Proteomes" id="UP000694727">
    <property type="component" value="Unplaced"/>
</dbReference>
<dbReference type="Proteomes" id="UP000694728">
    <property type="component" value="Unplaced"/>
</dbReference>
<dbReference type="Bgee" id="ENSSSCG00000025434">
    <property type="expression patterns" value="Expressed in pituitary gland and 27 other cell types or tissues"/>
</dbReference>
<dbReference type="ExpressionAtlas" id="P01219">
    <property type="expression patterns" value="baseline and differential"/>
</dbReference>
<dbReference type="GO" id="GO:0005615">
    <property type="term" value="C:extracellular space"/>
    <property type="evidence" value="ECO:0000250"/>
    <property type="project" value="UniProtKB"/>
</dbReference>
<dbReference type="GO" id="GO:0016914">
    <property type="term" value="C:follicle-stimulating hormone complex"/>
    <property type="evidence" value="ECO:0000250"/>
    <property type="project" value="UniProtKB"/>
</dbReference>
<dbReference type="GO" id="GO:0016913">
    <property type="term" value="F:follicle-stimulating hormone activity"/>
    <property type="evidence" value="ECO:0000250"/>
    <property type="project" value="UniProtKB"/>
</dbReference>
<dbReference type="GO" id="GO:0007186">
    <property type="term" value="P:G protein-coupled receptor signaling pathway"/>
    <property type="evidence" value="ECO:0000250"/>
    <property type="project" value="UniProtKB"/>
</dbReference>
<dbReference type="GO" id="GO:0010893">
    <property type="term" value="P:positive regulation of steroid biosynthetic process"/>
    <property type="evidence" value="ECO:0000250"/>
    <property type="project" value="UniProtKB"/>
</dbReference>
<dbReference type="GO" id="GO:0010469">
    <property type="term" value="P:regulation of signaling receptor activity"/>
    <property type="evidence" value="ECO:0000250"/>
    <property type="project" value="UniProtKB"/>
</dbReference>
<dbReference type="GO" id="GO:0006590">
    <property type="term" value="P:thyroid hormone generation"/>
    <property type="evidence" value="ECO:0000318"/>
    <property type="project" value="GO_Central"/>
</dbReference>
<dbReference type="FunFam" id="2.10.90.10:FF:000011">
    <property type="entry name" value="Glycoprotein hormones alpha chain"/>
    <property type="match status" value="1"/>
</dbReference>
<dbReference type="Gene3D" id="2.10.90.10">
    <property type="entry name" value="Cystine-knot cytokines"/>
    <property type="match status" value="1"/>
</dbReference>
<dbReference type="InterPro" id="IPR029034">
    <property type="entry name" value="Cystine-knot_cytokine"/>
</dbReference>
<dbReference type="InterPro" id="IPR000476">
    <property type="entry name" value="Glyco_hormone"/>
</dbReference>
<dbReference type="PANTHER" id="PTHR11509">
    <property type="entry name" value="GLYCOPROTEIN HORMONE ALPHA CHAIN"/>
    <property type="match status" value="1"/>
</dbReference>
<dbReference type="PANTHER" id="PTHR11509:SF0">
    <property type="entry name" value="GLYCOPROTEIN HORMONES ALPHA CHAIN"/>
    <property type="match status" value="1"/>
</dbReference>
<dbReference type="Pfam" id="PF00236">
    <property type="entry name" value="Hormone_6"/>
    <property type="match status" value="1"/>
</dbReference>
<dbReference type="PRINTS" id="PR00274">
    <property type="entry name" value="GLYCOHORMONE"/>
</dbReference>
<dbReference type="SMART" id="SM00067">
    <property type="entry name" value="GHA"/>
    <property type="match status" value="1"/>
</dbReference>
<dbReference type="SUPFAM" id="SSF57501">
    <property type="entry name" value="Cystine-knot cytokines"/>
    <property type="match status" value="1"/>
</dbReference>
<dbReference type="PROSITE" id="PS00779">
    <property type="entry name" value="GLYCO_HORMONE_ALPHA_1"/>
    <property type="match status" value="1"/>
</dbReference>
<dbReference type="PROSITE" id="PS00780">
    <property type="entry name" value="GLYCO_HORMONE_ALPHA_2"/>
    <property type="match status" value="1"/>
</dbReference>
<dbReference type="PROSITE" id="PS50277">
    <property type="entry name" value="GLYCO_HORMONE_ALPHA_3"/>
    <property type="match status" value="1"/>
</dbReference>
<proteinExistence type="evidence at protein level"/>
<comment type="function">
    <text evidence="1">Shared alpha chain of the active heterodimeric glycoprotein hormones thyrotropin/thyroid stimulating hormone/TSH, lutropin/luteinizing hormone/LH and follitropin/follicle stimulating hormone/FSH. These hormones bind specific receptors on target cells that in turn activate downstream signaling pathways.</text>
</comment>
<comment type="subunit">
    <text evidence="1">Heterodimer. The active hormones thyrotropin, lutropin and follitropin are heterodimers composed of CGA, a common alpha chain described here and a unique beta chain which confers their biological specificity to the hormones: TSHB for thyrotropin, LHB for lutropin and FSHB for follitropin.</text>
</comment>
<comment type="subcellular location">
    <subcellularLocation>
        <location evidence="1">Secreted</location>
    </subcellularLocation>
</comment>
<comment type="similarity">
    <text evidence="3">Belongs to the glycoprotein hormones subunit alpha family.</text>
</comment>
<keyword id="KW-0903">Direct protein sequencing</keyword>
<keyword id="KW-1015">Disulfide bond</keyword>
<keyword id="KW-0325">Glycoprotein</keyword>
<keyword id="KW-0372">Hormone</keyword>
<keyword id="KW-1185">Reference proteome</keyword>
<keyword id="KW-0964">Secreted</keyword>
<keyword id="KW-0732">Signal</keyword>
<evidence type="ECO:0000250" key="1">
    <source>
        <dbReference type="UniProtKB" id="P01215"/>
    </source>
</evidence>
<evidence type="ECO:0000269" key="2">
    <source>
    </source>
</evidence>
<evidence type="ECO:0000305" key="3"/>
<organism>
    <name type="scientific">Sus scrofa</name>
    <name type="common">Pig</name>
    <dbReference type="NCBI Taxonomy" id="9823"/>
    <lineage>
        <taxon>Eukaryota</taxon>
        <taxon>Metazoa</taxon>
        <taxon>Chordata</taxon>
        <taxon>Craniata</taxon>
        <taxon>Vertebrata</taxon>
        <taxon>Euteleostomi</taxon>
        <taxon>Mammalia</taxon>
        <taxon>Eutheria</taxon>
        <taxon>Laurasiatheria</taxon>
        <taxon>Artiodactyla</taxon>
        <taxon>Suina</taxon>
        <taxon>Suidae</taxon>
        <taxon>Sus</taxon>
    </lineage>
</organism>
<name>GLHA_PIG</name>